<reference key="1">
    <citation type="journal article" date="2003" name="J. Biol. Chem.">
        <title>Spheniscins, avian beta-defensins in preserved stomach contents of the king penguin, Aptenodytes patagonicus.</title>
        <authorList>
            <person name="Thouzeau C."/>
            <person name="Le Maho Y."/>
            <person name="Froget G."/>
            <person name="Sabatier L."/>
            <person name="Le Bohec C."/>
            <person name="Hoffmann J.A."/>
            <person name="Bulet P."/>
        </authorList>
    </citation>
    <scope>PROTEIN SEQUENCE</scope>
    <scope>FUNCTION</scope>
    <scope>SUBUNIT</scope>
    <scope>SUBCELLULAR LOCATION</scope>
    <scope>MASS SPECTROMETRY</scope>
    <source>
        <tissue>Stomach</tissue>
    </source>
</reference>
<sequence length="38" mass="4488">SFGLCRLRRGFCAHGRCRFPSIPIGRCSRFVQCCRRVW</sequence>
<dbReference type="SMR" id="P83429"/>
<dbReference type="GO" id="GO:0005576">
    <property type="term" value="C:extracellular region"/>
    <property type="evidence" value="ECO:0007669"/>
    <property type="project" value="UniProtKB-SubCell"/>
</dbReference>
<dbReference type="GO" id="GO:0042742">
    <property type="term" value="P:defense response to bacterium"/>
    <property type="evidence" value="ECO:0007669"/>
    <property type="project" value="UniProtKB-KW"/>
</dbReference>
<dbReference type="GO" id="GO:0050832">
    <property type="term" value="P:defense response to fungus"/>
    <property type="evidence" value="ECO:0007669"/>
    <property type="project" value="UniProtKB-KW"/>
</dbReference>
<dbReference type="GO" id="GO:0031640">
    <property type="term" value="P:killing of cells of another organism"/>
    <property type="evidence" value="ECO:0007669"/>
    <property type="project" value="UniProtKB-KW"/>
</dbReference>
<dbReference type="InterPro" id="IPR001855">
    <property type="entry name" value="Defensin_beta-like"/>
</dbReference>
<dbReference type="Pfam" id="PF00711">
    <property type="entry name" value="Defensin_beta"/>
    <property type="match status" value="1"/>
</dbReference>
<dbReference type="SUPFAM" id="SSF57392">
    <property type="entry name" value="Defensin-like"/>
    <property type="match status" value="1"/>
</dbReference>
<name>SPHE1_APTPA</name>
<evidence type="ECO:0000250" key="1"/>
<evidence type="ECO:0000269" key="2">
    <source>
    </source>
</evidence>
<evidence type="ECO:0000305" key="3"/>
<protein>
    <recommendedName>
        <fullName>Spheniscin-1</fullName>
        <shortName>Sphe-1</shortName>
    </recommendedName>
    <alternativeName>
        <fullName>pBD-1</fullName>
    </alternativeName>
</protein>
<accession>P83429</accession>
<feature type="peptide" id="PRO_0000044728" description="Spheniscin-1">
    <location>
        <begin position="1"/>
        <end position="38"/>
    </location>
</feature>
<feature type="disulfide bond" evidence="1">
    <location>
        <begin position="5"/>
        <end position="33"/>
    </location>
</feature>
<feature type="disulfide bond">
    <location>
        <begin position="12"/>
        <end position="27"/>
    </location>
</feature>
<feature type="disulfide bond" evidence="1">
    <location>
        <begin position="17"/>
        <end position="34"/>
    </location>
</feature>
<keyword id="KW-0044">Antibiotic</keyword>
<keyword id="KW-0929">Antimicrobial</keyword>
<keyword id="KW-0211">Defensin</keyword>
<keyword id="KW-0903">Direct protein sequencing</keyword>
<keyword id="KW-1015">Disulfide bond</keyword>
<keyword id="KW-0295">Fungicide</keyword>
<keyword id="KW-0964">Secreted</keyword>
<comment type="function">
    <text evidence="2">Has antifungal activity and antibacterial activity against Gram-positive and Gram-negative bacteria. Involved in the process of food preservation in the stomach during the incubation fast. May also be present during infection.</text>
</comment>
<comment type="subunit">
    <text evidence="2">Monomer.</text>
</comment>
<comment type="subcellular location">
    <subcellularLocation>
        <location evidence="2">Secreted</location>
    </subcellularLocation>
</comment>
<comment type="tissue specificity">
    <text>Secreted into the stomach cavity.</text>
</comment>
<comment type="mass spectrometry" mass="4482.8" method="MALDI" evidence="2"/>
<comment type="similarity">
    <text evidence="3">Belongs to the beta-defensin family.</text>
</comment>
<proteinExistence type="evidence at protein level"/>
<organism>
    <name type="scientific">Aptenodytes patagonicus</name>
    <name type="common">King penguin</name>
    <dbReference type="NCBI Taxonomy" id="9234"/>
    <lineage>
        <taxon>Eukaryota</taxon>
        <taxon>Metazoa</taxon>
        <taxon>Chordata</taxon>
        <taxon>Craniata</taxon>
        <taxon>Vertebrata</taxon>
        <taxon>Euteleostomi</taxon>
        <taxon>Archelosauria</taxon>
        <taxon>Archosauria</taxon>
        <taxon>Dinosauria</taxon>
        <taxon>Saurischia</taxon>
        <taxon>Theropoda</taxon>
        <taxon>Coelurosauria</taxon>
        <taxon>Aves</taxon>
        <taxon>Neognathae</taxon>
        <taxon>Neoaves</taxon>
        <taxon>Aequornithes</taxon>
        <taxon>Sphenisciformes</taxon>
        <taxon>Spheniscidae</taxon>
        <taxon>Aptenodytes</taxon>
    </lineage>
</organism>